<evidence type="ECO:0000250" key="1"/>
<evidence type="ECO:0000250" key="2">
    <source>
        <dbReference type="UniProtKB" id="P33419"/>
    </source>
</evidence>
<evidence type="ECO:0000256" key="3">
    <source>
        <dbReference type="SAM" id="MobiDB-lite"/>
    </source>
</evidence>
<evidence type="ECO:0000305" key="4"/>
<sequence length="253" mass="29280">MDYSNFGNSASKKFQDDTLNRVRKEHEEALKKLREENFSSNTSELGNKKHYRAQERMSSPLHRLSPTGKSDDRKVKSPLDDKLRRQLREGNTRLPPPPFSSYGMPPTNRSNLDRIRRRTSSPVRTDKFASQNVIDDQRLEIKYLERIVYDQGTVIDNLTSRITRLESFILNSISDRGDKNFASLEHSRSFSGFPTNKTYGLQMGGLYENDMPYRRSSDNINKEGAREDRSSQIHIENESTEDILKILSSSFHN</sequence>
<comment type="function">
    <text evidence="1">Component of the spindle pole body (SPB) required for the proper execution of spindle pole body (SPB) duplication. Links the central plaque component SPC42 to the inner plaque component SPC110 (By similarity).</text>
</comment>
<comment type="subunit">
    <text evidence="1">Component of the SPC110 complex containing at least CMD1, SPC29, SPC42 and SCP110. Interacts with BBP1.</text>
</comment>
<comment type="subcellular location">
    <subcellularLocation>
        <location evidence="1">Nucleus</location>
    </subcellularLocation>
    <subcellularLocation>
        <location evidence="1">Cytoplasm</location>
        <location evidence="1">Cytoskeleton</location>
        <location evidence="1">Microtubule organizing center</location>
        <location evidence="1">Spindle pole body</location>
    </subcellularLocation>
</comment>
<comment type="PTM">
    <text evidence="1">MPS1-mediated phosphorylation at Thr-240 is required for spindle pole body duplication.</text>
</comment>
<comment type="similarity">
    <text evidence="4">Belongs to the SPC29 family.</text>
</comment>
<reference key="1">
    <citation type="journal article" date="2009" name="Proc. Natl. Acad. Sci. U.S.A.">
        <title>Eukaryote-to-eukaryote gene transfer events revealed by the genome sequence of the wine yeast Saccharomyces cerevisiae EC1118.</title>
        <authorList>
            <person name="Novo M."/>
            <person name="Bigey F."/>
            <person name="Beyne E."/>
            <person name="Galeote V."/>
            <person name="Gavory F."/>
            <person name="Mallet S."/>
            <person name="Cambon B."/>
            <person name="Legras J.-L."/>
            <person name="Wincker P."/>
            <person name="Casaregola S."/>
            <person name="Dequin S."/>
        </authorList>
    </citation>
    <scope>NUCLEOTIDE SEQUENCE [LARGE SCALE GENOMIC DNA]</scope>
    <source>
        <strain>Lalvin EC1118 / Prise de mousse</strain>
    </source>
</reference>
<organism>
    <name type="scientific">Saccharomyces cerevisiae (strain Lalvin EC1118 / Prise de mousse)</name>
    <name type="common">Baker's yeast</name>
    <dbReference type="NCBI Taxonomy" id="643680"/>
    <lineage>
        <taxon>Eukaryota</taxon>
        <taxon>Fungi</taxon>
        <taxon>Dikarya</taxon>
        <taxon>Ascomycota</taxon>
        <taxon>Saccharomycotina</taxon>
        <taxon>Saccharomycetes</taxon>
        <taxon>Saccharomycetales</taxon>
        <taxon>Saccharomycetaceae</taxon>
        <taxon>Saccharomyces</taxon>
    </lineage>
</organism>
<feature type="chain" id="PRO_0000409192" description="Spindle pole component 29">
    <location>
        <begin position="1"/>
        <end position="253"/>
    </location>
</feature>
<feature type="region of interest" description="Disordered" evidence="3">
    <location>
        <begin position="1"/>
        <end position="20"/>
    </location>
</feature>
<feature type="region of interest" description="Disordered" evidence="3">
    <location>
        <begin position="31"/>
        <end position="123"/>
    </location>
</feature>
<feature type="region of interest" description="Disordered" evidence="3">
    <location>
        <begin position="210"/>
        <end position="231"/>
    </location>
</feature>
<feature type="compositionally biased region" description="Polar residues" evidence="3">
    <location>
        <begin position="1"/>
        <end position="12"/>
    </location>
</feature>
<feature type="compositionally biased region" description="Basic and acidic residues" evidence="3">
    <location>
        <begin position="69"/>
        <end position="91"/>
    </location>
</feature>
<feature type="compositionally biased region" description="Basic and acidic residues" evidence="3">
    <location>
        <begin position="211"/>
        <end position="231"/>
    </location>
</feature>
<feature type="modified residue" description="Phosphothreonine" evidence="2">
    <location>
        <position position="18"/>
    </location>
</feature>
<feature type="modified residue" description="Phosphoserine" evidence="2">
    <location>
        <position position="65"/>
    </location>
</feature>
<feature type="modified residue" description="Phosphothreonine; by MPS1" evidence="2">
    <location>
        <position position="240"/>
    </location>
</feature>
<gene>
    <name type="primary">SPC29</name>
    <name type="synonym">LPH3</name>
    <name type="synonym">NIP29</name>
    <name type="ORF">EC1118_1P2_1717g</name>
</gene>
<accession>C8ZIQ5</accession>
<name>SPC29_YEAS8</name>
<keyword id="KW-0963">Cytoplasm</keyword>
<keyword id="KW-0206">Cytoskeleton</keyword>
<keyword id="KW-0539">Nucleus</keyword>
<keyword id="KW-0597">Phosphoprotein</keyword>
<dbReference type="EMBL" id="FN394217">
    <property type="protein sequence ID" value="CAY86836.1"/>
    <property type="molecule type" value="Genomic_DNA"/>
</dbReference>
<dbReference type="SMR" id="C8ZIQ5"/>
<dbReference type="HOGENOM" id="CLU_1099229_0_0_1"/>
<dbReference type="OrthoDB" id="15422at4893"/>
<dbReference type="Proteomes" id="UP000000286">
    <property type="component" value="Chromosome XVI, Scaffold EC1118_1P2"/>
</dbReference>
<dbReference type="GO" id="GO:0005823">
    <property type="term" value="C:central plaque of spindle pole body"/>
    <property type="evidence" value="ECO:0007669"/>
    <property type="project" value="InterPro"/>
</dbReference>
<dbReference type="GO" id="GO:0005737">
    <property type="term" value="C:cytoplasm"/>
    <property type="evidence" value="ECO:0007669"/>
    <property type="project" value="UniProtKB-KW"/>
</dbReference>
<dbReference type="GO" id="GO:0005634">
    <property type="term" value="C:nucleus"/>
    <property type="evidence" value="ECO:0007669"/>
    <property type="project" value="UniProtKB-SubCell"/>
</dbReference>
<dbReference type="GO" id="GO:0005200">
    <property type="term" value="F:structural constituent of cytoskeleton"/>
    <property type="evidence" value="ECO:0007669"/>
    <property type="project" value="InterPro"/>
</dbReference>
<dbReference type="GO" id="GO:0030474">
    <property type="term" value="P:spindle pole body duplication"/>
    <property type="evidence" value="ECO:0007669"/>
    <property type="project" value="InterPro"/>
</dbReference>
<dbReference type="InterPro" id="IPR031392">
    <property type="entry name" value="Spc29"/>
</dbReference>
<dbReference type="Pfam" id="PF17082">
    <property type="entry name" value="Spc29"/>
    <property type="match status" value="1"/>
</dbReference>
<proteinExistence type="inferred from homology"/>
<protein>
    <recommendedName>
        <fullName>Spindle pole component 29</fullName>
    </recommendedName>
</protein>